<reference key="1">
    <citation type="submission" date="1995-04" db="EMBL/GenBank/DDBJ databases">
        <title>Recombinant-DNA mediated production of xanthan gum.</title>
        <authorList>
            <person name="Capage M.A."/>
            <person name="Doherty D.H."/>
            <person name="Betlach M.R."/>
            <person name="Vanderslice R.W."/>
        </authorList>
    </citation>
    <scope>NUCLEOTIDE SEQUENCE [GENOMIC DNA]</scope>
    <source>
        <strain>ATCC 13951 / NCIB 11803 / NRRL B-1459</strain>
    </source>
</reference>
<reference key="2">
    <citation type="journal article" date="1998" name="J. Bacteriol.">
        <title>Xanthomonas campestris pv. campestris gum mutants: effects on xanthan biosynthesis and plant virulence.</title>
        <authorList>
            <person name="Katzen F."/>
            <person name="Ferreiro D.U."/>
            <person name="Oddo C.G."/>
            <person name="Ielmini M.V."/>
            <person name="Becker A."/>
            <person name="Puhler A."/>
            <person name="Ielpi L."/>
        </authorList>
    </citation>
    <scope>DISRUPTION PHENOTYPE</scope>
    <source>
        <strain>ATCC 13951 / NCIB 11803 / NRRL B-1459</strain>
    </source>
</reference>
<reference key="3">
    <citation type="journal article" date="2011" name="Glycobiology">
        <title>Expression, purification and biochemical characterization of GumI, a monotopic membrane GDP-mannose:glycolipid 4-beta-D-mannosyltransferase from Xanthomonas campestris pv. campestris.</title>
        <authorList>
            <person name="Salinas S.R."/>
            <person name="Bianco M.I."/>
            <person name="Barreras M."/>
            <person name="Ielpi L."/>
        </authorList>
    </citation>
    <scope>FUNCTION</scope>
    <scope>CATALYTIC ACTIVITY</scope>
    <scope>ROLE IN XANTHAN BIOSYNTHESIS</scope>
    <scope>SUBSTRATE SPECIFICITY</scope>
    <scope>BIOPHYSICOCHEMICAL PROPERTIES</scope>
    <scope>SUBCELLULAR LOCATION</scope>
    <scope>DISRUPTION PHENOTYPE</scope>
    <scope>PATHWAY</scope>
    <scope>IDENTIFICATION BY MASS SPECTROMETRY</scope>
    <source>
        <strain>ATCC 13951 / NCIB 11803 / NRRL B-1459</strain>
    </source>
</reference>
<accession>Q56775</accession>
<evidence type="ECO:0000255" key="1"/>
<evidence type="ECO:0000269" key="2">
    <source>
    </source>
</evidence>
<evidence type="ECO:0000269" key="3">
    <source>
    </source>
</evidence>
<evidence type="ECO:0000305" key="4"/>
<sequence length="349" mass="39089">MSASASLPVTRAAAAPRITVLFSTEKPNANTNPYLTQLYDALPDAVQPRFFSMREALLSRYDVLHLHWPEYLLRHPSKMGTLAKQACAALLLMKLQLTGTPVVRTLHNLAPHEDRGWRERALLRWIDQLTRRWIRINATTPVRPPFTDTILHGHYRDWFATMEQSTTLPGRLLHFGLIRPYKGVEVLLDVMRDVQDPRLSLRIVGNPATPXMRTLVETACAQDARISALLAYVEEPVLAREVSACELVVLPYKQMHNSGTLLLALSLARPVLAPWSESNAAIADEVGPGWVFLYEGEFDAALLSGMLDQVRAAPRGPAPDLSQRDWPRIGQLHYRTYLEALGKDGDAAL</sequence>
<dbReference type="EC" id="2.4.1.251"/>
<dbReference type="EMBL" id="U22511">
    <property type="protein sequence ID" value="AAA86377.1"/>
    <property type="status" value="ALT_FRAME"/>
    <property type="molecule type" value="Genomic_DNA"/>
</dbReference>
<dbReference type="PIR" id="S67858">
    <property type="entry name" value="S67858"/>
</dbReference>
<dbReference type="CAZy" id="GT94">
    <property type="family name" value="Glycosyltransferase Family 94"/>
</dbReference>
<dbReference type="BioCyc" id="MetaCyc:MONOMER-15983"/>
<dbReference type="BRENDA" id="2.4.1.251">
    <property type="organism ID" value="6708"/>
</dbReference>
<dbReference type="UniPathway" id="UPA01017"/>
<dbReference type="GO" id="GO:0005886">
    <property type="term" value="C:plasma membrane"/>
    <property type="evidence" value="ECO:0000314"/>
    <property type="project" value="UniProtKB"/>
</dbReference>
<dbReference type="GO" id="GO:0019187">
    <property type="term" value="F:beta-1,4-mannosyltransferase activity"/>
    <property type="evidence" value="ECO:0000314"/>
    <property type="project" value="UniProtKB"/>
</dbReference>
<dbReference type="GO" id="GO:0000271">
    <property type="term" value="P:polysaccharide biosynthetic process"/>
    <property type="evidence" value="ECO:0000315"/>
    <property type="project" value="UniProtKB"/>
</dbReference>
<dbReference type="Gene3D" id="3.40.50.2000">
    <property type="entry name" value="Glycogen Phosphorylase B"/>
    <property type="match status" value="2"/>
</dbReference>
<dbReference type="Pfam" id="PF13692">
    <property type="entry name" value="Glyco_trans_1_4"/>
    <property type="match status" value="1"/>
</dbReference>
<dbReference type="SUPFAM" id="SSF53756">
    <property type="entry name" value="UDP-Glycosyltransferase/glycogen phosphorylase"/>
    <property type="match status" value="1"/>
</dbReference>
<protein>
    <recommendedName>
        <fullName>GDP-mannose:glycolipid 4-beta-D-mannosyltransferase</fullName>
        <ecNumber>2.4.1.251</ecNumber>
    </recommendedName>
    <alternativeName>
        <fullName>GlcA-beta-(1-&gt;2)-D-Man-alpha-(1-&gt;3)-D-Glc-beta-(1-&gt;4)-D-Glc-alpha-1-diphosphoundecaprenol 4-beta-mannosyltransferase</fullName>
    </alternativeName>
</protein>
<proteinExistence type="evidence at protein level"/>
<keyword id="KW-0119">Carbohydrate metabolism</keyword>
<keyword id="KW-0997">Cell inner membrane</keyword>
<keyword id="KW-1003">Cell membrane</keyword>
<keyword id="KW-0328">Glycosyltransferase</keyword>
<keyword id="KW-0472">Membrane</keyword>
<keyword id="KW-0732">Signal</keyword>
<keyword id="KW-0808">Transferase</keyword>
<gene>
    <name type="primary">gumI</name>
</gene>
<comment type="function">
    <text evidence="2">Nonprocessive beta-mannosyltransferase that catalyzes the transfer of a mannose residue from GDP-mannose to glucuronic acid-beta-1,2-mannose-alpha-1,3-glucose-beta-1,4-glucose-PP-polyisoprenyl to form the lipid-linked pentasaccharide repeating unit of xanthan, Man-GlcA-Man-Glc(2)-PP-Pol. Is involved in the biosynthesis of the exopolysaccharide xanthan. To a lesser extent, can also use ADP-Man and even GDP-Glc as sugar donor substrates in vitro. Is unable to transfer a Man residue to the free-tetrasaccharide GlcA-Man-Glc(2) used as an acceptor, which indicates that the diphosphate group and the lipid moiety in the acceptor substrate are of major importance for acceptor binding and catalysis.</text>
</comment>
<comment type="catalytic activity">
    <reaction evidence="2">
        <text>beta-D-GlcA-(1-&gt;2)-alpha-D-Man-(1-&gt;3)-beta-D-Glc-(1-&gt;4)-alpha-D-Glc-di-trans,octa-cis-undecaprenyl diphosphate + GDP-alpha-D-mannose = beta-D-Man-(1-&gt;4)-beta-D-GlcA-(1-&gt;2)-alpha-D-Man-(1-&gt;3)-beta-D-Glc-(1-&gt;4)-alpha-D-Glc-di-trans,octa-cis-undecaprenyl diphosphate + GDP + H(+)</text>
        <dbReference type="Rhea" id="RHEA:28306"/>
        <dbReference type="ChEBI" id="CHEBI:15378"/>
        <dbReference type="ChEBI" id="CHEBI:57527"/>
        <dbReference type="ChEBI" id="CHEBI:58189"/>
        <dbReference type="ChEBI" id="CHEBI:61227"/>
        <dbReference type="ChEBI" id="CHEBI:61230"/>
        <dbReference type="EC" id="2.4.1.251"/>
    </reaction>
</comment>
<comment type="biophysicochemical properties">
    <phDependence>
        <text evidence="2">Optimum pH is around 8. Activity decreases below pH 7.5 and above pH 9.5.</text>
    </phDependence>
    <temperatureDependence>
        <text evidence="2">Optimum temperature is aroud 35 degrees Celsius with a 20% drop at 20 degrees Celsius and a near-complete inhibition at 60 degrees Celsius, probably due to enzyme denaturation.</text>
    </temperatureDependence>
</comment>
<comment type="pathway">
    <text evidence="2">Glycan biosynthesis; xanthan biosynthesis.</text>
</comment>
<comment type="subcellular location">
    <subcellularLocation>
        <location evidence="2">Cell inner membrane</location>
    </subcellularLocation>
    <text>Monotopic integral membrane protein, mostly cytoplasmic.</text>
</comment>
<comment type="disruption phenotype">
    <text evidence="2 3">Cells lacking this gene display a non-mucoid phenotype, indicating that they have a reduced abundance of polysaccharides relative to the wild-type strain. More precisely, mutational interruption of the gumI gene leads to accumulation of GlcA-beta-1,2-Man-alpha-1,3-Glc-beta-1,4-Glc-PP-polyisoprenyl (GlcA-Man-Glc2-PP-Pol), and a decrease in xanthan production of more than 95%.</text>
</comment>
<comment type="similarity">
    <text evidence="4">Belongs to the glycosyltransferase 94 family.</text>
</comment>
<comment type="sequence caution" evidence="4">
    <conflict type="frameshift">
        <sequence resource="EMBL-CDS" id="AAA86377"/>
    </conflict>
</comment>
<feature type="signal peptide" evidence="1">
    <location>
        <begin position="1"/>
        <end position="14"/>
    </location>
</feature>
<feature type="chain" id="PRO_0000414017" description="GDP-mannose:glycolipid 4-beta-D-mannosyltransferase">
    <location>
        <begin position="15"/>
        <end position="349"/>
    </location>
</feature>
<name>GUMI_XANCE</name>
<organism>
    <name type="scientific">Xanthomonas campestris pv. campestris</name>
    <dbReference type="NCBI Taxonomy" id="340"/>
    <lineage>
        <taxon>Bacteria</taxon>
        <taxon>Pseudomonadati</taxon>
        <taxon>Pseudomonadota</taxon>
        <taxon>Gammaproteobacteria</taxon>
        <taxon>Lysobacterales</taxon>
        <taxon>Lysobacteraceae</taxon>
        <taxon>Xanthomonas</taxon>
    </lineage>
</organism>